<comment type="function">
    <text evidence="1">IGPS catalyzes the conversion of PRFAR and glutamine to IGP, AICAR and glutamate. The HisH subunit catalyzes the hydrolysis of glutamine to glutamate and ammonia as part of the synthesis of IGP and AICAR. The resulting ammonia molecule is channeled to the active site of HisF.</text>
</comment>
<comment type="catalytic activity">
    <reaction evidence="1">
        <text>5-[(5-phospho-1-deoxy-D-ribulos-1-ylimino)methylamino]-1-(5-phospho-beta-D-ribosyl)imidazole-4-carboxamide + L-glutamine = D-erythro-1-(imidazol-4-yl)glycerol 3-phosphate + 5-amino-1-(5-phospho-beta-D-ribosyl)imidazole-4-carboxamide + L-glutamate + H(+)</text>
        <dbReference type="Rhea" id="RHEA:24793"/>
        <dbReference type="ChEBI" id="CHEBI:15378"/>
        <dbReference type="ChEBI" id="CHEBI:29985"/>
        <dbReference type="ChEBI" id="CHEBI:58278"/>
        <dbReference type="ChEBI" id="CHEBI:58359"/>
        <dbReference type="ChEBI" id="CHEBI:58475"/>
        <dbReference type="ChEBI" id="CHEBI:58525"/>
        <dbReference type="EC" id="4.3.2.10"/>
    </reaction>
</comment>
<comment type="catalytic activity">
    <reaction evidence="1">
        <text>L-glutamine + H2O = L-glutamate + NH4(+)</text>
        <dbReference type="Rhea" id="RHEA:15889"/>
        <dbReference type="ChEBI" id="CHEBI:15377"/>
        <dbReference type="ChEBI" id="CHEBI:28938"/>
        <dbReference type="ChEBI" id="CHEBI:29985"/>
        <dbReference type="ChEBI" id="CHEBI:58359"/>
        <dbReference type="EC" id="3.5.1.2"/>
    </reaction>
</comment>
<comment type="pathway">
    <text evidence="1">Amino-acid biosynthesis; L-histidine biosynthesis; L-histidine from 5-phospho-alpha-D-ribose 1-diphosphate: step 5/9.</text>
</comment>
<comment type="subunit">
    <text evidence="1">Heterodimer of HisH and HisF.</text>
</comment>
<comment type="subcellular location">
    <subcellularLocation>
        <location evidence="1">Cytoplasm</location>
    </subcellularLocation>
</comment>
<protein>
    <recommendedName>
        <fullName evidence="1">Imidazole glycerol phosphate synthase subunit HisH</fullName>
        <ecNumber evidence="1">4.3.2.10</ecNumber>
    </recommendedName>
    <alternativeName>
        <fullName evidence="1">IGP synthase glutaminase subunit</fullName>
        <ecNumber evidence="1">3.5.1.2</ecNumber>
    </alternativeName>
    <alternativeName>
        <fullName evidence="1">IGP synthase subunit HisH</fullName>
    </alternativeName>
    <alternativeName>
        <fullName evidence="1">ImGP synthase subunit HisH</fullName>
        <shortName evidence="1">IGPS subunit HisH</shortName>
    </alternativeName>
</protein>
<organism>
    <name type="scientific">Sulfurisphaera tokodaii (strain DSM 16993 / JCM 10545 / NBRC 100140 / 7)</name>
    <name type="common">Sulfolobus tokodaii</name>
    <dbReference type="NCBI Taxonomy" id="273063"/>
    <lineage>
        <taxon>Archaea</taxon>
        <taxon>Thermoproteota</taxon>
        <taxon>Thermoprotei</taxon>
        <taxon>Sulfolobales</taxon>
        <taxon>Sulfolobaceae</taxon>
        <taxon>Sulfurisphaera</taxon>
    </lineage>
</organism>
<name>HIS5_SULTO</name>
<evidence type="ECO:0000255" key="1">
    <source>
        <dbReference type="HAMAP-Rule" id="MF_00278"/>
    </source>
</evidence>
<feature type="chain" id="PRO_0000152470" description="Imidazole glycerol phosphate synthase subunit HisH">
    <location>
        <begin position="1"/>
        <end position="196"/>
    </location>
</feature>
<feature type="domain" description="Glutamine amidotransferase type-1" evidence="1">
    <location>
        <begin position="2"/>
        <end position="196"/>
    </location>
</feature>
<feature type="active site" description="Nucleophile" evidence="1">
    <location>
        <position position="76"/>
    </location>
</feature>
<feature type="active site" evidence="1">
    <location>
        <position position="175"/>
    </location>
</feature>
<feature type="active site" evidence="1">
    <location>
        <position position="177"/>
    </location>
</feature>
<reference key="1">
    <citation type="journal article" date="2001" name="DNA Res.">
        <title>Complete genome sequence of an aerobic thermoacidophilic Crenarchaeon, Sulfolobus tokodaii strain7.</title>
        <authorList>
            <person name="Kawarabayasi Y."/>
            <person name="Hino Y."/>
            <person name="Horikawa H."/>
            <person name="Jin-no K."/>
            <person name="Takahashi M."/>
            <person name="Sekine M."/>
            <person name="Baba S."/>
            <person name="Ankai A."/>
            <person name="Kosugi H."/>
            <person name="Hosoyama A."/>
            <person name="Fukui S."/>
            <person name="Nagai Y."/>
            <person name="Nishijima K."/>
            <person name="Otsuka R."/>
            <person name="Nakazawa H."/>
            <person name="Takamiya M."/>
            <person name="Kato Y."/>
            <person name="Yoshizawa T."/>
            <person name="Tanaka T."/>
            <person name="Kudoh Y."/>
            <person name="Yamazaki J."/>
            <person name="Kushida N."/>
            <person name="Oguchi A."/>
            <person name="Aoki K."/>
            <person name="Masuda S."/>
            <person name="Yanagii M."/>
            <person name="Nishimura M."/>
            <person name="Yamagishi A."/>
            <person name="Oshima T."/>
            <person name="Kikuchi H."/>
        </authorList>
    </citation>
    <scope>NUCLEOTIDE SEQUENCE [LARGE SCALE GENOMIC DNA]</scope>
    <source>
        <strain>DSM 16993 / JCM 10545 / NBRC 100140 / 7</strain>
    </source>
</reference>
<gene>
    <name evidence="1" type="primary">hisH</name>
    <name type="ordered locus">STK_14660</name>
</gene>
<sequence length="196" mass="21918">MKATLINYGVGNLFSIKAGLERVGFNVKISFLPEGDEDVIVLPGVGAFSAVSSYLNSMKDKFNELRERGVKFLGVCLGMQVMFDEGTEGGLSKGLGWFKGKVDKIHSNVKLPHIGWDKLFVNKDSCNLTEGLDGKYVYYVHSYVAYTNDYVAYSEYGIKYPAIVCNDFAVGTQFHPEKSSVTGKIFLRNFYSWVKR</sequence>
<accession>Q970Y7</accession>
<accession>F9VNE5</accession>
<dbReference type="EC" id="4.3.2.10" evidence="1"/>
<dbReference type="EC" id="3.5.1.2" evidence="1"/>
<dbReference type="EMBL" id="BA000023">
    <property type="protein sequence ID" value="BAK54591.1"/>
    <property type="molecule type" value="Genomic_DNA"/>
</dbReference>
<dbReference type="RefSeq" id="WP_052846574.1">
    <property type="nucleotide sequence ID" value="NC_003106.2"/>
</dbReference>
<dbReference type="SMR" id="Q970Y7"/>
<dbReference type="STRING" id="273063.STK_14660"/>
<dbReference type="GeneID" id="1459500"/>
<dbReference type="KEGG" id="sto:STK_14660"/>
<dbReference type="PATRIC" id="fig|273063.9.peg.1671"/>
<dbReference type="eggNOG" id="arCOG00089">
    <property type="taxonomic scope" value="Archaea"/>
</dbReference>
<dbReference type="OrthoDB" id="33401at2157"/>
<dbReference type="UniPathway" id="UPA00031">
    <property type="reaction ID" value="UER00010"/>
</dbReference>
<dbReference type="Proteomes" id="UP000001015">
    <property type="component" value="Chromosome"/>
</dbReference>
<dbReference type="GO" id="GO:0005737">
    <property type="term" value="C:cytoplasm"/>
    <property type="evidence" value="ECO:0007669"/>
    <property type="project" value="UniProtKB-SubCell"/>
</dbReference>
<dbReference type="GO" id="GO:0004359">
    <property type="term" value="F:glutaminase activity"/>
    <property type="evidence" value="ECO:0007669"/>
    <property type="project" value="UniProtKB-EC"/>
</dbReference>
<dbReference type="GO" id="GO:0000107">
    <property type="term" value="F:imidazoleglycerol-phosphate synthase activity"/>
    <property type="evidence" value="ECO:0007669"/>
    <property type="project" value="UniProtKB-UniRule"/>
</dbReference>
<dbReference type="GO" id="GO:0016829">
    <property type="term" value="F:lyase activity"/>
    <property type="evidence" value="ECO:0007669"/>
    <property type="project" value="UniProtKB-KW"/>
</dbReference>
<dbReference type="GO" id="GO:0000105">
    <property type="term" value="P:L-histidine biosynthetic process"/>
    <property type="evidence" value="ECO:0007669"/>
    <property type="project" value="UniProtKB-UniRule"/>
</dbReference>
<dbReference type="Gene3D" id="3.40.50.880">
    <property type="match status" value="1"/>
</dbReference>
<dbReference type="HAMAP" id="MF_00278">
    <property type="entry name" value="HisH"/>
    <property type="match status" value="1"/>
</dbReference>
<dbReference type="InterPro" id="IPR029062">
    <property type="entry name" value="Class_I_gatase-like"/>
</dbReference>
<dbReference type="InterPro" id="IPR017926">
    <property type="entry name" value="GATASE"/>
</dbReference>
<dbReference type="InterPro" id="IPR010139">
    <property type="entry name" value="Imidazole-glycPsynth_HisH"/>
</dbReference>
<dbReference type="NCBIfam" id="TIGR01855">
    <property type="entry name" value="IMP_synth_hisH"/>
    <property type="match status" value="1"/>
</dbReference>
<dbReference type="PANTHER" id="PTHR42701">
    <property type="entry name" value="IMIDAZOLE GLYCEROL PHOSPHATE SYNTHASE SUBUNIT HISH"/>
    <property type="match status" value="1"/>
</dbReference>
<dbReference type="PANTHER" id="PTHR42701:SF1">
    <property type="entry name" value="IMIDAZOLE GLYCEROL PHOSPHATE SYNTHASE SUBUNIT HISH"/>
    <property type="match status" value="1"/>
</dbReference>
<dbReference type="Pfam" id="PF00117">
    <property type="entry name" value="GATase"/>
    <property type="match status" value="1"/>
</dbReference>
<dbReference type="PIRSF" id="PIRSF000495">
    <property type="entry name" value="Amidotransf_hisH"/>
    <property type="match status" value="1"/>
</dbReference>
<dbReference type="SUPFAM" id="SSF52317">
    <property type="entry name" value="Class I glutamine amidotransferase-like"/>
    <property type="match status" value="1"/>
</dbReference>
<dbReference type="PROSITE" id="PS51273">
    <property type="entry name" value="GATASE_TYPE_1"/>
    <property type="match status" value="1"/>
</dbReference>
<proteinExistence type="inferred from homology"/>
<keyword id="KW-0028">Amino-acid biosynthesis</keyword>
<keyword id="KW-0963">Cytoplasm</keyword>
<keyword id="KW-0315">Glutamine amidotransferase</keyword>
<keyword id="KW-0368">Histidine biosynthesis</keyword>
<keyword id="KW-0378">Hydrolase</keyword>
<keyword id="KW-0456">Lyase</keyword>
<keyword id="KW-1185">Reference proteome</keyword>